<organism>
    <name type="scientific">Hyperthermus butylicus (strain DSM 5456 / JCM 9403 / PLM1-5)</name>
    <dbReference type="NCBI Taxonomy" id="415426"/>
    <lineage>
        <taxon>Archaea</taxon>
        <taxon>Thermoproteota</taxon>
        <taxon>Thermoprotei</taxon>
        <taxon>Desulfurococcales</taxon>
        <taxon>Pyrodictiaceae</taxon>
        <taxon>Hyperthermus</taxon>
    </lineage>
</organism>
<dbReference type="EC" id="4.3.3.6" evidence="1"/>
<dbReference type="EC" id="3.5.1.2" evidence="1"/>
<dbReference type="EMBL" id="CP000493">
    <property type="protein sequence ID" value="ABM80877.1"/>
    <property type="molecule type" value="Genomic_DNA"/>
</dbReference>
<dbReference type="RefSeq" id="WP_011822195.1">
    <property type="nucleotide sequence ID" value="NC_008818.1"/>
</dbReference>
<dbReference type="SMR" id="A2BLL6"/>
<dbReference type="STRING" id="415426.Hbut_1033"/>
<dbReference type="MEROPS" id="C26.A32"/>
<dbReference type="EnsemblBacteria" id="ABM80877">
    <property type="protein sequence ID" value="ABM80877"/>
    <property type="gene ID" value="Hbut_1033"/>
</dbReference>
<dbReference type="GeneID" id="4782000"/>
<dbReference type="KEGG" id="hbu:Hbut_1033"/>
<dbReference type="eggNOG" id="arCOG00034">
    <property type="taxonomic scope" value="Archaea"/>
</dbReference>
<dbReference type="HOGENOM" id="CLU_069674_2_0_2"/>
<dbReference type="OrthoDB" id="26717at2157"/>
<dbReference type="UniPathway" id="UPA00245"/>
<dbReference type="Proteomes" id="UP000002593">
    <property type="component" value="Chromosome"/>
</dbReference>
<dbReference type="GO" id="GO:0005829">
    <property type="term" value="C:cytosol"/>
    <property type="evidence" value="ECO:0007669"/>
    <property type="project" value="TreeGrafter"/>
</dbReference>
<dbReference type="GO" id="GO:1903600">
    <property type="term" value="C:glutaminase complex"/>
    <property type="evidence" value="ECO:0007669"/>
    <property type="project" value="TreeGrafter"/>
</dbReference>
<dbReference type="GO" id="GO:0004359">
    <property type="term" value="F:glutaminase activity"/>
    <property type="evidence" value="ECO:0007669"/>
    <property type="project" value="UniProtKB-UniRule"/>
</dbReference>
<dbReference type="GO" id="GO:0036381">
    <property type="term" value="F:pyridoxal 5'-phosphate synthase (glutamine hydrolysing) activity"/>
    <property type="evidence" value="ECO:0007669"/>
    <property type="project" value="UniProtKB-UniRule"/>
</dbReference>
<dbReference type="GO" id="GO:0006543">
    <property type="term" value="P:glutamine catabolic process"/>
    <property type="evidence" value="ECO:0007669"/>
    <property type="project" value="UniProtKB-UniRule"/>
</dbReference>
<dbReference type="GO" id="GO:0042823">
    <property type="term" value="P:pyridoxal phosphate biosynthetic process"/>
    <property type="evidence" value="ECO:0007669"/>
    <property type="project" value="UniProtKB-UniRule"/>
</dbReference>
<dbReference type="GO" id="GO:0008614">
    <property type="term" value="P:pyridoxine metabolic process"/>
    <property type="evidence" value="ECO:0007669"/>
    <property type="project" value="TreeGrafter"/>
</dbReference>
<dbReference type="CDD" id="cd01749">
    <property type="entry name" value="GATase1_PB"/>
    <property type="match status" value="1"/>
</dbReference>
<dbReference type="FunFam" id="3.40.50.880:FF:000010">
    <property type="entry name" value="uncharacterized protein LOC100176842 isoform X2"/>
    <property type="match status" value="1"/>
</dbReference>
<dbReference type="Gene3D" id="3.40.50.880">
    <property type="match status" value="1"/>
</dbReference>
<dbReference type="HAMAP" id="MF_01615">
    <property type="entry name" value="PdxT"/>
    <property type="match status" value="1"/>
</dbReference>
<dbReference type="InterPro" id="IPR029062">
    <property type="entry name" value="Class_I_gatase-like"/>
</dbReference>
<dbReference type="InterPro" id="IPR002161">
    <property type="entry name" value="PdxT/SNO"/>
</dbReference>
<dbReference type="InterPro" id="IPR021196">
    <property type="entry name" value="PdxT/SNO_CS"/>
</dbReference>
<dbReference type="NCBIfam" id="TIGR03800">
    <property type="entry name" value="PLP_synth_Pdx2"/>
    <property type="match status" value="1"/>
</dbReference>
<dbReference type="PANTHER" id="PTHR31559">
    <property type="entry name" value="PYRIDOXAL 5'-PHOSPHATE SYNTHASE SUBUNIT SNO"/>
    <property type="match status" value="1"/>
</dbReference>
<dbReference type="PANTHER" id="PTHR31559:SF0">
    <property type="entry name" value="PYRIDOXAL 5'-PHOSPHATE SYNTHASE SUBUNIT SNO1-RELATED"/>
    <property type="match status" value="1"/>
</dbReference>
<dbReference type="Pfam" id="PF01174">
    <property type="entry name" value="SNO"/>
    <property type="match status" value="1"/>
</dbReference>
<dbReference type="PIRSF" id="PIRSF005639">
    <property type="entry name" value="Glut_amidoT_SNO"/>
    <property type="match status" value="1"/>
</dbReference>
<dbReference type="SUPFAM" id="SSF52317">
    <property type="entry name" value="Class I glutamine amidotransferase-like"/>
    <property type="match status" value="1"/>
</dbReference>
<dbReference type="PROSITE" id="PS01236">
    <property type="entry name" value="PDXT_SNO_1"/>
    <property type="match status" value="1"/>
</dbReference>
<dbReference type="PROSITE" id="PS51130">
    <property type="entry name" value="PDXT_SNO_2"/>
    <property type="match status" value="1"/>
</dbReference>
<comment type="function">
    <text evidence="1">Catalyzes the hydrolysis of glutamine to glutamate and ammonia as part of the biosynthesis of pyridoxal 5'-phosphate. The resulting ammonia molecule is channeled to the active site of PdxS.</text>
</comment>
<comment type="catalytic activity">
    <reaction evidence="1">
        <text>aldehydo-D-ribose 5-phosphate + D-glyceraldehyde 3-phosphate + L-glutamine = pyridoxal 5'-phosphate + L-glutamate + phosphate + 3 H2O + H(+)</text>
        <dbReference type="Rhea" id="RHEA:31507"/>
        <dbReference type="ChEBI" id="CHEBI:15377"/>
        <dbReference type="ChEBI" id="CHEBI:15378"/>
        <dbReference type="ChEBI" id="CHEBI:29985"/>
        <dbReference type="ChEBI" id="CHEBI:43474"/>
        <dbReference type="ChEBI" id="CHEBI:58273"/>
        <dbReference type="ChEBI" id="CHEBI:58359"/>
        <dbReference type="ChEBI" id="CHEBI:59776"/>
        <dbReference type="ChEBI" id="CHEBI:597326"/>
        <dbReference type="EC" id="4.3.3.6"/>
    </reaction>
</comment>
<comment type="catalytic activity">
    <reaction evidence="1">
        <text>L-glutamine + H2O = L-glutamate + NH4(+)</text>
        <dbReference type="Rhea" id="RHEA:15889"/>
        <dbReference type="ChEBI" id="CHEBI:15377"/>
        <dbReference type="ChEBI" id="CHEBI:28938"/>
        <dbReference type="ChEBI" id="CHEBI:29985"/>
        <dbReference type="ChEBI" id="CHEBI:58359"/>
        <dbReference type="EC" id="3.5.1.2"/>
    </reaction>
</comment>
<comment type="pathway">
    <text evidence="1">Cofactor biosynthesis; pyridoxal 5'-phosphate biosynthesis.</text>
</comment>
<comment type="subunit">
    <text evidence="1">In the presence of PdxS, forms a dodecamer of heterodimers. Only shows activity in the heterodimer.</text>
</comment>
<comment type="similarity">
    <text evidence="1">Belongs to the glutaminase PdxT/SNO family.</text>
</comment>
<proteinExistence type="inferred from homology"/>
<accession>A2BLL6</accession>
<reference key="1">
    <citation type="journal article" date="2007" name="Archaea">
        <title>The genome of Hyperthermus butylicus: a sulfur-reducing, peptide fermenting, neutrophilic Crenarchaeote growing up to 108 degrees C.</title>
        <authorList>
            <person name="Bruegger K."/>
            <person name="Chen L."/>
            <person name="Stark M."/>
            <person name="Zibat A."/>
            <person name="Redder P."/>
            <person name="Ruepp A."/>
            <person name="Awayez M."/>
            <person name="She Q."/>
            <person name="Garrett R.A."/>
            <person name="Klenk H.-P."/>
        </authorList>
    </citation>
    <scope>NUCLEOTIDE SEQUENCE [LARGE SCALE GENOMIC DNA]</scope>
    <source>
        <strain>DSM 5456 / JCM 9403 / PLM1-5</strain>
    </source>
</reference>
<sequence>MVVVGVLALQGDWIEHIELLREIEGVEAVPVKTEKQLESIDALIIPGGESTTIGRLIERRGLLEPLRDRIRAGLPVLGTCAGSILLAKKVRDRVVGPVEQPLLAVMDIAVLRNAFGRQMNSFEAEVHIEGVGTVHAAFIRAPIIEETWGEARPIAKLNHPLLGEVTVAARQKAIIATVFHPEITGDSKLHKLLVAAAKGRAF</sequence>
<feature type="chain" id="PRO_0000293017" description="Pyridoxal 5'-phosphate synthase subunit PdxT">
    <location>
        <begin position="1"/>
        <end position="202"/>
    </location>
</feature>
<feature type="active site" description="Nucleophile" evidence="1">
    <location>
        <position position="80"/>
    </location>
</feature>
<feature type="active site" description="Charge relay system" evidence="1">
    <location>
        <position position="180"/>
    </location>
</feature>
<feature type="active site" description="Charge relay system" evidence="1">
    <location>
        <position position="182"/>
    </location>
</feature>
<feature type="binding site" evidence="1">
    <location>
        <begin position="48"/>
        <end position="50"/>
    </location>
    <ligand>
        <name>L-glutamine</name>
        <dbReference type="ChEBI" id="CHEBI:58359"/>
    </ligand>
</feature>
<feature type="binding site" evidence="1">
    <location>
        <position position="112"/>
    </location>
    <ligand>
        <name>L-glutamine</name>
        <dbReference type="ChEBI" id="CHEBI:58359"/>
    </ligand>
</feature>
<feature type="binding site" evidence="1">
    <location>
        <begin position="139"/>
        <end position="140"/>
    </location>
    <ligand>
        <name>L-glutamine</name>
        <dbReference type="ChEBI" id="CHEBI:58359"/>
    </ligand>
</feature>
<keyword id="KW-0315">Glutamine amidotransferase</keyword>
<keyword id="KW-0378">Hydrolase</keyword>
<keyword id="KW-0456">Lyase</keyword>
<keyword id="KW-0663">Pyridoxal phosphate</keyword>
<keyword id="KW-1185">Reference proteome</keyword>
<name>PDXT_HYPBU</name>
<evidence type="ECO:0000255" key="1">
    <source>
        <dbReference type="HAMAP-Rule" id="MF_01615"/>
    </source>
</evidence>
<protein>
    <recommendedName>
        <fullName evidence="1">Pyridoxal 5'-phosphate synthase subunit PdxT</fullName>
        <ecNumber evidence="1">4.3.3.6</ecNumber>
    </recommendedName>
    <alternativeName>
        <fullName evidence="1">Pdx2</fullName>
    </alternativeName>
    <alternativeName>
        <fullName evidence="1">Pyridoxal 5'-phosphate synthase glutaminase subunit</fullName>
        <ecNumber evidence="1">3.5.1.2</ecNumber>
    </alternativeName>
</protein>
<gene>
    <name evidence="1" type="primary">pdxT</name>
    <name type="ordered locus">Hbut_1033</name>
</gene>